<organism>
    <name type="scientific">Candida tropicalis (strain ATCC MYA-3404 / T1)</name>
    <name type="common">Yeast</name>
    <dbReference type="NCBI Taxonomy" id="294747"/>
    <lineage>
        <taxon>Eukaryota</taxon>
        <taxon>Fungi</taxon>
        <taxon>Dikarya</taxon>
        <taxon>Ascomycota</taxon>
        <taxon>Saccharomycotina</taxon>
        <taxon>Pichiomycetes</taxon>
        <taxon>Debaryomycetaceae</taxon>
        <taxon>Candida/Lodderomyces clade</taxon>
        <taxon>Candida</taxon>
    </lineage>
</organism>
<gene>
    <name type="primary">MZM1</name>
    <name type="ORF">CTRG_06179</name>
</gene>
<feature type="transit peptide" description="Mitochondrion" evidence="2">
    <location>
        <begin position="1"/>
        <end position="10"/>
    </location>
</feature>
<feature type="chain" id="PRO_0000405491" description="Mitochondrial zinc maintenance protein 1, mitochondrial">
    <location>
        <begin position="11"/>
        <end position="117"/>
    </location>
</feature>
<feature type="region of interest" description="Disordered" evidence="3">
    <location>
        <begin position="91"/>
        <end position="117"/>
    </location>
</feature>
<keyword id="KW-0143">Chaperone</keyword>
<keyword id="KW-0496">Mitochondrion</keyword>
<keyword id="KW-1185">Reference proteome</keyword>
<keyword id="KW-0809">Transit peptide</keyword>
<reference key="1">
    <citation type="journal article" date="2009" name="Nature">
        <title>Evolution of pathogenicity and sexual reproduction in eight Candida genomes.</title>
        <authorList>
            <person name="Butler G."/>
            <person name="Rasmussen M.D."/>
            <person name="Lin M.F."/>
            <person name="Santos M.A.S."/>
            <person name="Sakthikumar S."/>
            <person name="Munro C.A."/>
            <person name="Rheinbay E."/>
            <person name="Grabherr M."/>
            <person name="Forche A."/>
            <person name="Reedy J.L."/>
            <person name="Agrafioti I."/>
            <person name="Arnaud M.B."/>
            <person name="Bates S."/>
            <person name="Brown A.J.P."/>
            <person name="Brunke S."/>
            <person name="Costanzo M.C."/>
            <person name="Fitzpatrick D.A."/>
            <person name="de Groot P.W.J."/>
            <person name="Harris D."/>
            <person name="Hoyer L.L."/>
            <person name="Hube B."/>
            <person name="Klis F.M."/>
            <person name="Kodira C."/>
            <person name="Lennard N."/>
            <person name="Logue M.E."/>
            <person name="Martin R."/>
            <person name="Neiman A.M."/>
            <person name="Nikolaou E."/>
            <person name="Quail M.A."/>
            <person name="Quinn J."/>
            <person name="Santos M.C."/>
            <person name="Schmitzberger F.F."/>
            <person name="Sherlock G."/>
            <person name="Shah P."/>
            <person name="Silverstein K.A.T."/>
            <person name="Skrzypek M.S."/>
            <person name="Soll D."/>
            <person name="Staggs R."/>
            <person name="Stansfield I."/>
            <person name="Stumpf M.P.H."/>
            <person name="Sudbery P.E."/>
            <person name="Srikantha T."/>
            <person name="Zeng Q."/>
            <person name="Berman J."/>
            <person name="Berriman M."/>
            <person name="Heitman J."/>
            <person name="Gow N.A.R."/>
            <person name="Lorenz M.C."/>
            <person name="Birren B.W."/>
            <person name="Kellis M."/>
            <person name="Cuomo C.A."/>
        </authorList>
    </citation>
    <scope>NUCLEOTIDE SEQUENCE [LARGE SCALE GENOMIC DNA]</scope>
    <source>
        <strain>ATCC MYA-3404 / T1</strain>
    </source>
</reference>
<sequence length="117" mass="13083">MSATLSAYRNALRATKVVFRHDLPILTAARTQIKENIRNNSNLKDTTEIEEAVKKLNDVSKFLISNIVQGEKQDDGKYFLNFHEKTELGDNESIKQGKKNLGSLAGKKGSSIRSCKD</sequence>
<comment type="function">
    <text evidence="1">Assembly factor required for Rieske Fe-S protein RIP1 incorporation into the cytochrome b-c1 (CIII) complex. Functions as a chaperone, binding to this subunit within the mitochondrial matrix and stabilizing it prior to its translocation and insertion into the late CIII dimeric intermediate within the mitochondrial inner membrane. Modulates the mitochondrial matrix zinc pool (By similarity).</text>
</comment>
<comment type="subunit">
    <text evidence="1">Interacts with RIP1.</text>
</comment>
<comment type="subcellular location">
    <subcellularLocation>
        <location evidence="1">Mitochondrion matrix</location>
    </subcellularLocation>
</comment>
<comment type="similarity">
    <text evidence="4">Belongs to the complex I LYR family. MZM1 subfamily.</text>
</comment>
<accession>C5MJD6</accession>
<name>MZM1_CANTT</name>
<proteinExistence type="inferred from homology"/>
<dbReference type="EMBL" id="GG692406">
    <property type="protein sequence ID" value="EER30139.1"/>
    <property type="molecule type" value="Genomic_DNA"/>
</dbReference>
<dbReference type="RefSeq" id="XP_002546701.1">
    <property type="nucleotide sequence ID" value="XM_002546655.1"/>
</dbReference>
<dbReference type="SMR" id="C5MJD6"/>
<dbReference type="STRING" id="294747.C5MJD6"/>
<dbReference type="EnsemblFungi" id="CTRG_06179-t43_1">
    <property type="protein sequence ID" value="CTRG_06179-t43_1-p1"/>
    <property type="gene ID" value="CTRG_06179"/>
</dbReference>
<dbReference type="GeneID" id="8300040"/>
<dbReference type="KEGG" id="ctp:CTRG_06179"/>
<dbReference type="VEuPathDB" id="FungiDB:CTRG_06179"/>
<dbReference type="eggNOG" id="ENOG502S6EF">
    <property type="taxonomic scope" value="Eukaryota"/>
</dbReference>
<dbReference type="OrthoDB" id="529194at2759"/>
<dbReference type="Proteomes" id="UP000002037">
    <property type="component" value="Unassembled WGS sequence"/>
</dbReference>
<dbReference type="GO" id="GO:0005759">
    <property type="term" value="C:mitochondrial matrix"/>
    <property type="evidence" value="ECO:0007669"/>
    <property type="project" value="UniProtKB-SubCell"/>
</dbReference>
<dbReference type="GO" id="GO:0044183">
    <property type="term" value="F:protein folding chaperone"/>
    <property type="evidence" value="ECO:0007669"/>
    <property type="project" value="TreeGrafter"/>
</dbReference>
<dbReference type="GO" id="GO:0034551">
    <property type="term" value="P:mitochondrial respiratory chain complex III assembly"/>
    <property type="evidence" value="ECO:0007669"/>
    <property type="project" value="InterPro"/>
</dbReference>
<dbReference type="CDD" id="cd20267">
    <property type="entry name" value="Complex1_LYR_LYRM7"/>
    <property type="match status" value="1"/>
</dbReference>
<dbReference type="InterPro" id="IPR045298">
    <property type="entry name" value="Complex1_LYR_LYRM7"/>
</dbReference>
<dbReference type="InterPro" id="IPR050435">
    <property type="entry name" value="MZM1/LYRM7"/>
</dbReference>
<dbReference type="PANTHER" id="PTHR46749">
    <property type="entry name" value="COMPLEX III ASSEMBLY FACTOR LYRM7"/>
    <property type="match status" value="1"/>
</dbReference>
<dbReference type="PANTHER" id="PTHR46749:SF1">
    <property type="entry name" value="COMPLEX III ASSEMBLY FACTOR LYRM7"/>
    <property type="match status" value="1"/>
</dbReference>
<protein>
    <recommendedName>
        <fullName>Mitochondrial zinc maintenance protein 1, mitochondrial</fullName>
    </recommendedName>
</protein>
<evidence type="ECO:0000250" key="1"/>
<evidence type="ECO:0000255" key="2"/>
<evidence type="ECO:0000256" key="3">
    <source>
        <dbReference type="SAM" id="MobiDB-lite"/>
    </source>
</evidence>
<evidence type="ECO:0000305" key="4"/>